<gene>
    <name evidence="1" type="primary">mnmC</name>
    <name type="ordered locus">HI_1534/HI_1535</name>
</gene>
<dbReference type="EC" id="2.1.1.61" evidence="1"/>
<dbReference type="EC" id="1.5.-.-" evidence="1"/>
<dbReference type="EMBL" id="L42023">
    <property type="protein sequence ID" value="AAC23184.1"/>
    <property type="status" value="ALT_FRAME"/>
    <property type="molecule type" value="Genomic_DNA"/>
</dbReference>
<dbReference type="EMBL" id="L42023">
    <property type="protein sequence ID" value="AAC23185.1"/>
    <property type="status" value="ALT_FRAME"/>
    <property type="molecule type" value="Genomic_DNA"/>
</dbReference>
<dbReference type="PIR" id="C64035">
    <property type="entry name" value="C64035"/>
</dbReference>
<dbReference type="PIR" id="D64035">
    <property type="entry name" value="D64035"/>
</dbReference>
<dbReference type="SMR" id="P44246"/>
<dbReference type="STRING" id="71421.HI_1535"/>
<dbReference type="DNASU" id="950397"/>
<dbReference type="EnsemblBacteria" id="AAC23184">
    <property type="protein sequence ID" value="AAC23184"/>
    <property type="gene ID" value="HI_1534"/>
</dbReference>
<dbReference type="EnsemblBacteria" id="AAC23185">
    <property type="protein sequence ID" value="AAC23185"/>
    <property type="gene ID" value="HI_1535"/>
</dbReference>
<dbReference type="KEGG" id="hin:HI_1534"/>
<dbReference type="KEGG" id="hin:HI_1535"/>
<dbReference type="eggNOG" id="COG0665">
    <property type="taxonomic scope" value="Bacteria"/>
</dbReference>
<dbReference type="eggNOG" id="COG4121">
    <property type="taxonomic scope" value="Bacteria"/>
</dbReference>
<dbReference type="HOGENOM" id="CLU_061971_2_1_6"/>
<dbReference type="PhylomeDB" id="P44246"/>
<dbReference type="Proteomes" id="UP000000579">
    <property type="component" value="Chromosome"/>
</dbReference>
<dbReference type="GO" id="GO:0005737">
    <property type="term" value="C:cytoplasm"/>
    <property type="evidence" value="ECO:0000318"/>
    <property type="project" value="GO_Central"/>
</dbReference>
<dbReference type="GO" id="GO:0050660">
    <property type="term" value="F:flavin adenine dinucleotide binding"/>
    <property type="evidence" value="ECO:0007669"/>
    <property type="project" value="UniProtKB-UniRule"/>
</dbReference>
<dbReference type="GO" id="GO:0016645">
    <property type="term" value="F:oxidoreductase activity, acting on the CH-NH group of donors"/>
    <property type="evidence" value="ECO:0007669"/>
    <property type="project" value="InterPro"/>
</dbReference>
<dbReference type="GO" id="GO:0004808">
    <property type="term" value="F:tRNA (5-methylaminomethyl-2-thiouridylate)(34)-methyltransferase activity"/>
    <property type="evidence" value="ECO:0000318"/>
    <property type="project" value="GO_Central"/>
</dbReference>
<dbReference type="GO" id="GO:0032259">
    <property type="term" value="P:methylation"/>
    <property type="evidence" value="ECO:0007669"/>
    <property type="project" value="UniProtKB-KW"/>
</dbReference>
<dbReference type="GO" id="GO:0002098">
    <property type="term" value="P:tRNA wobble uridine modification"/>
    <property type="evidence" value="ECO:0000318"/>
    <property type="project" value="GO_Central"/>
</dbReference>
<dbReference type="FunFam" id="3.40.50.150:FF:000107">
    <property type="entry name" value="tRNA 5-methylaminomethyl-2-thiouridine biosynthesis bifunctional protein MnmC"/>
    <property type="match status" value="1"/>
</dbReference>
<dbReference type="Gene3D" id="3.30.9.10">
    <property type="entry name" value="D-Amino Acid Oxidase, subunit A, domain 2"/>
    <property type="match status" value="1"/>
</dbReference>
<dbReference type="Gene3D" id="3.50.50.60">
    <property type="entry name" value="FAD/NAD(P)-binding domain"/>
    <property type="match status" value="1"/>
</dbReference>
<dbReference type="Gene3D" id="3.40.50.150">
    <property type="entry name" value="Vaccinia Virus protein VP39"/>
    <property type="match status" value="1"/>
</dbReference>
<dbReference type="HAMAP" id="MF_01102">
    <property type="entry name" value="MnmC"/>
    <property type="match status" value="1"/>
</dbReference>
<dbReference type="InterPro" id="IPR006076">
    <property type="entry name" value="FAD-dep_OxRdtase"/>
</dbReference>
<dbReference type="InterPro" id="IPR036188">
    <property type="entry name" value="FAD/NAD-bd_sf"/>
</dbReference>
<dbReference type="InterPro" id="IPR008471">
    <property type="entry name" value="MnmC-like_methylTransf"/>
</dbReference>
<dbReference type="InterPro" id="IPR029063">
    <property type="entry name" value="SAM-dependent_MTases_sf"/>
</dbReference>
<dbReference type="InterPro" id="IPR023032">
    <property type="entry name" value="tRNA_MAMT_biosynth_bifunc_MnmC"/>
</dbReference>
<dbReference type="InterPro" id="IPR047785">
    <property type="entry name" value="tRNA_MNMC2"/>
</dbReference>
<dbReference type="InterPro" id="IPR017610">
    <property type="entry name" value="tRNA_S-uridine_synth_MnmC_C"/>
</dbReference>
<dbReference type="NCBIfam" id="TIGR03197">
    <property type="entry name" value="MnmC_Cterm"/>
    <property type="match status" value="1"/>
</dbReference>
<dbReference type="NCBIfam" id="NF002481">
    <property type="entry name" value="PRK01747.1-2"/>
    <property type="match status" value="1"/>
</dbReference>
<dbReference type="NCBIfam" id="NF002484">
    <property type="entry name" value="PRK01747.1-5"/>
    <property type="match status" value="1"/>
</dbReference>
<dbReference type="NCBIfam" id="NF033855">
    <property type="entry name" value="tRNA_MNMC2"/>
    <property type="match status" value="1"/>
</dbReference>
<dbReference type="PANTHER" id="PTHR13847">
    <property type="entry name" value="SARCOSINE DEHYDROGENASE-RELATED"/>
    <property type="match status" value="1"/>
</dbReference>
<dbReference type="PANTHER" id="PTHR13847:SF283">
    <property type="entry name" value="TRNA 5-METHYLAMINOMETHYL-2-THIOURIDINE BIOSYNTHESIS BIFUNCTIONAL PROTEIN MNMC"/>
    <property type="match status" value="1"/>
</dbReference>
<dbReference type="Pfam" id="PF01266">
    <property type="entry name" value="DAO"/>
    <property type="match status" value="1"/>
</dbReference>
<dbReference type="Pfam" id="PF05430">
    <property type="entry name" value="Methyltransf_30"/>
    <property type="match status" value="1"/>
</dbReference>
<dbReference type="SUPFAM" id="SSF51905">
    <property type="entry name" value="FAD/NAD(P)-binding domain"/>
    <property type="match status" value="1"/>
</dbReference>
<name>MNMC_HAEIN</name>
<reference key="1">
    <citation type="journal article" date="1995" name="Science">
        <title>Whole-genome random sequencing and assembly of Haemophilus influenzae Rd.</title>
        <authorList>
            <person name="Fleischmann R.D."/>
            <person name="Adams M.D."/>
            <person name="White O."/>
            <person name="Clayton R.A."/>
            <person name="Kirkness E.F."/>
            <person name="Kerlavage A.R."/>
            <person name="Bult C.J."/>
            <person name="Tomb J.-F."/>
            <person name="Dougherty B.A."/>
            <person name="Merrick J.M."/>
            <person name="McKenney K."/>
            <person name="Sutton G.G."/>
            <person name="FitzHugh W."/>
            <person name="Fields C.A."/>
            <person name="Gocayne J.D."/>
            <person name="Scott J.D."/>
            <person name="Shirley R."/>
            <person name="Liu L.-I."/>
            <person name="Glodek A."/>
            <person name="Kelley J.M."/>
            <person name="Weidman J.F."/>
            <person name="Phillips C.A."/>
            <person name="Spriggs T."/>
            <person name="Hedblom E."/>
            <person name="Cotton M.D."/>
            <person name="Utterback T.R."/>
            <person name="Hanna M.C."/>
            <person name="Nguyen D.T."/>
            <person name="Saudek D.M."/>
            <person name="Brandon R.C."/>
            <person name="Fine L.D."/>
            <person name="Fritchman J.L."/>
            <person name="Fuhrmann J.L."/>
            <person name="Geoghagen N.S.M."/>
            <person name="Gnehm C.L."/>
            <person name="McDonald L.A."/>
            <person name="Small K.V."/>
            <person name="Fraser C.M."/>
            <person name="Smith H.O."/>
            <person name="Venter J.C."/>
        </authorList>
    </citation>
    <scope>NUCLEOTIDE SEQUENCE [LARGE SCALE GENOMIC DNA]</scope>
    <source>
        <strain>ATCC 51907 / DSM 11121 / KW20 / Rd</strain>
    </source>
</reference>
<feature type="chain" id="PRO_0000095017" description="tRNA 5-methylaminomethyl-2-thiouridine biosynthesis bifunctional protein MnmC">
    <location>
        <begin position="1"/>
        <end position="670"/>
    </location>
</feature>
<feature type="region of interest" description="tRNA (mnm(5)s(2)U34)-methyltransferase">
    <location>
        <begin position="1"/>
        <end position="242"/>
    </location>
</feature>
<feature type="region of interest" description="FAD-dependent cmnm(5)s(2)U34 oxidoreductase">
    <location>
        <begin position="269"/>
        <end position="670"/>
    </location>
</feature>
<sequence length="670" mass="75691">MTFSVQHAEIHFNQNHIPVSDQFDDVYFSNENGLAETDYVFLQGNQLWERWITHKDANFVIAETGFGTGLNFFAVTKLFREFRQQHENHPLKRLNFISFEKYPLKITALLQAHLACPQFEDLSAHLQRYWPSLILGCHRIHFGETTLDLWFGDVSENLPQLGDYMNERINAWFLDGFAPSKNPEMWNDDLYNLMFRFTKPNGTFATFTAASAVRKGLESAGFNVTKRKGFGKKRECLSGLKIQSKSTALSTPWYLAQPAKMEKQDVAIIGGGIASLCAAISLIKRGAKVTIYCEDDALALNASGNKQGAFYPQLSDDNALTVDFYLHAFSYGRQLLDWAIEQNIVFEHEFCGVALCAYNEKSAVKLTKISQLGLPNEIFQMLSAEQLSEKVGLPLNCEGGWIEQGAWLAPRQFVQNAFSFLEKQGVVIKTAQKITALSQLEKGWELKNMQGQKYCHEVVILANGHKITDFVQTEKLPLYPIRGQVSQIPTSENLLKLKSVLCYDGYLTPANQLKTSHCIGASMFRDNVDRDFSEQEQQENQQKLQQNIAQPWTQDVDTSDNLARVGIRCSVRDLAPMVGNVPHFEQQQADYYNLFNLRRRKQPIQSAANFQNLFLIAALGSRGLTSAPLLGETLASIIYGEPLPISEGILHNLSANRAWVKKWLKGSKVE</sequence>
<comment type="function">
    <text evidence="1">Catalyzes the last two steps in the biosynthesis of 5-methylaminomethyl-2-thiouridine (mnm(5)s(2)U) at the wobble position (U34) in tRNA. Catalyzes the FAD-dependent demodification of cmnm(5)s(2)U34 to nm(5)s(2)U34, followed by the transfer of a methyl group from S-adenosyl-L-methionine to nm(5)s(2)U34, to form mnm(5)s(2)U34.</text>
</comment>
<comment type="catalytic activity">
    <reaction evidence="1">
        <text>5-aminomethyl-2-thiouridine(34) in tRNA + S-adenosyl-L-methionine = 5-methylaminomethyl-2-thiouridine(34) in tRNA + S-adenosyl-L-homocysteine + H(+)</text>
        <dbReference type="Rhea" id="RHEA:19569"/>
        <dbReference type="Rhea" id="RHEA-COMP:10195"/>
        <dbReference type="Rhea" id="RHEA-COMP:10197"/>
        <dbReference type="ChEBI" id="CHEBI:15378"/>
        <dbReference type="ChEBI" id="CHEBI:57856"/>
        <dbReference type="ChEBI" id="CHEBI:59789"/>
        <dbReference type="ChEBI" id="CHEBI:74454"/>
        <dbReference type="ChEBI" id="CHEBI:74455"/>
        <dbReference type="EC" id="2.1.1.61"/>
    </reaction>
</comment>
<comment type="cofactor">
    <cofactor evidence="1">
        <name>FAD</name>
        <dbReference type="ChEBI" id="CHEBI:57692"/>
    </cofactor>
</comment>
<comment type="subcellular location">
    <subcellularLocation>
        <location evidence="1">Cytoplasm</location>
    </subcellularLocation>
</comment>
<comment type="similarity">
    <text evidence="1">In the N-terminal section; belongs to the methyltransferase superfamily. tRNA (mnm(5)s(2)U34)-methyltransferase family.</text>
</comment>
<comment type="similarity">
    <text evidence="1">In the C-terminal section; belongs to the DAO family.</text>
</comment>
<comment type="sequence caution" evidence="2">
    <conflict type="frameshift">
        <sequence resource="EMBL-CDS" id="AAC23184"/>
    </conflict>
    <text>Produces two separate ORFs.</text>
</comment>
<comment type="sequence caution" evidence="2">
    <conflict type="frameshift">
        <sequence resource="EMBL-CDS" id="AAC23185"/>
    </conflict>
    <text>Produces two separate ORFs.</text>
</comment>
<keyword id="KW-0963">Cytoplasm</keyword>
<keyword id="KW-0274">FAD</keyword>
<keyword id="KW-0285">Flavoprotein</keyword>
<keyword id="KW-0489">Methyltransferase</keyword>
<keyword id="KW-0511">Multifunctional enzyme</keyword>
<keyword id="KW-0560">Oxidoreductase</keyword>
<keyword id="KW-1185">Reference proteome</keyword>
<keyword id="KW-0949">S-adenosyl-L-methionine</keyword>
<keyword id="KW-0808">Transferase</keyword>
<keyword id="KW-0819">tRNA processing</keyword>
<organism>
    <name type="scientific">Haemophilus influenzae (strain ATCC 51907 / DSM 11121 / KW20 / Rd)</name>
    <dbReference type="NCBI Taxonomy" id="71421"/>
    <lineage>
        <taxon>Bacteria</taxon>
        <taxon>Pseudomonadati</taxon>
        <taxon>Pseudomonadota</taxon>
        <taxon>Gammaproteobacteria</taxon>
        <taxon>Pasteurellales</taxon>
        <taxon>Pasteurellaceae</taxon>
        <taxon>Haemophilus</taxon>
    </lineage>
</organism>
<accession>P44246</accession>
<accession>P44245</accession>
<proteinExistence type="inferred from homology"/>
<evidence type="ECO:0000255" key="1">
    <source>
        <dbReference type="HAMAP-Rule" id="MF_01102"/>
    </source>
</evidence>
<evidence type="ECO:0000305" key="2"/>
<protein>
    <recommendedName>
        <fullName evidence="1">tRNA 5-methylaminomethyl-2-thiouridine biosynthesis bifunctional protein MnmC</fullName>
        <shortName evidence="1">tRNA mnm(5)s(2)U biosynthesis bifunctional protein</shortName>
    </recommendedName>
    <domain>
        <recommendedName>
            <fullName evidence="1">tRNA (mnm(5)s(2)U34)-methyltransferase</fullName>
            <ecNumber evidence="1">2.1.1.61</ecNumber>
        </recommendedName>
    </domain>
    <domain>
        <recommendedName>
            <fullName evidence="1">FAD-dependent cmnm(5)s(2)U34 oxidoreductase</fullName>
            <ecNumber evidence="1">1.5.-.-</ecNumber>
        </recommendedName>
    </domain>
</protein>